<evidence type="ECO:0000250" key="1"/>
<evidence type="ECO:0000255" key="2"/>
<evidence type="ECO:0000255" key="3">
    <source>
        <dbReference type="PROSITE-ProRule" id="PRU00076"/>
    </source>
</evidence>
<evidence type="ECO:0000255" key="4">
    <source>
        <dbReference type="PROSITE-ProRule" id="PRU00222"/>
    </source>
</evidence>
<evidence type="ECO:0000256" key="5">
    <source>
        <dbReference type="SAM" id="MobiDB-lite"/>
    </source>
</evidence>
<evidence type="ECO:0000269" key="6">
    <source>
    </source>
</evidence>
<evidence type="ECO:0000269" key="7">
    <source>
    </source>
</evidence>
<evidence type="ECO:0000305" key="8"/>
<evidence type="ECO:0007829" key="9">
    <source>
        <dbReference type="PDB" id="2D3J"/>
    </source>
</evidence>
<evidence type="ECO:0007829" key="10">
    <source>
        <dbReference type="PDB" id="2YGN"/>
    </source>
</evidence>
<evidence type="ECO:0007829" key="11">
    <source>
        <dbReference type="PDB" id="2YGO"/>
    </source>
</evidence>
<dbReference type="EMBL" id="AF122922">
    <property type="protein sequence ID" value="AAD25402.1"/>
    <property type="molecule type" value="mRNA"/>
</dbReference>
<dbReference type="EMBL" id="AY358344">
    <property type="protein sequence ID" value="AAQ88710.1"/>
    <property type="molecule type" value="mRNA"/>
</dbReference>
<dbReference type="EMBL" id="BC018037">
    <property type="protein sequence ID" value="AAH18037.1"/>
    <property type="molecule type" value="mRNA"/>
</dbReference>
<dbReference type="CCDS" id="CCDS8971.1"/>
<dbReference type="PIR" id="A59180">
    <property type="entry name" value="A59180"/>
</dbReference>
<dbReference type="RefSeq" id="NP_009122.2">
    <property type="nucleotide sequence ID" value="NM_007191.5"/>
</dbReference>
<dbReference type="PDB" id="2D3J">
    <property type="method" value="NMR"/>
    <property type="chains" value="A=32-181"/>
</dbReference>
<dbReference type="PDB" id="2YGN">
    <property type="method" value="X-ray"/>
    <property type="resolution" value="1.85 A"/>
    <property type="chains" value="A=35-178"/>
</dbReference>
<dbReference type="PDB" id="2YGO">
    <property type="method" value="X-ray"/>
    <property type="resolution" value="1.85 A"/>
    <property type="chains" value="A=35-210"/>
</dbReference>
<dbReference type="PDB" id="2YGP">
    <property type="method" value="X-ray"/>
    <property type="resolution" value="2.22 A"/>
    <property type="chains" value="A=35-210"/>
</dbReference>
<dbReference type="PDB" id="2YGQ">
    <property type="method" value="X-ray"/>
    <property type="resolution" value="3.95 A"/>
    <property type="chains" value="A=35-346"/>
</dbReference>
<dbReference type="PDBsum" id="2D3J"/>
<dbReference type="PDBsum" id="2YGN"/>
<dbReference type="PDBsum" id="2YGO"/>
<dbReference type="PDBsum" id="2YGP"/>
<dbReference type="PDBsum" id="2YGQ"/>
<dbReference type="BMRB" id="Q9Y5W5"/>
<dbReference type="SMR" id="Q9Y5W5"/>
<dbReference type="BioGRID" id="116366">
    <property type="interactions" value="173"/>
</dbReference>
<dbReference type="DIP" id="DIP-59097N"/>
<dbReference type="FunCoup" id="Q9Y5W5">
    <property type="interactions" value="221"/>
</dbReference>
<dbReference type="IntAct" id="Q9Y5W5">
    <property type="interactions" value="149"/>
</dbReference>
<dbReference type="MINT" id="Q9Y5W5"/>
<dbReference type="STRING" id="9606.ENSP00000286574"/>
<dbReference type="GlyCosmos" id="Q9Y5W5">
    <property type="glycosylation" value="2 sites, No reported glycans"/>
</dbReference>
<dbReference type="GlyGen" id="Q9Y5W5">
    <property type="glycosylation" value="3 sites"/>
</dbReference>
<dbReference type="iPTMnet" id="Q9Y5W5"/>
<dbReference type="PhosphoSitePlus" id="Q9Y5W5"/>
<dbReference type="BioMuta" id="WIF1"/>
<dbReference type="DMDM" id="61252765"/>
<dbReference type="MassIVE" id="Q9Y5W5"/>
<dbReference type="PaxDb" id="9606-ENSP00000286574"/>
<dbReference type="PeptideAtlas" id="Q9Y5W5"/>
<dbReference type="ProteomicsDB" id="86517"/>
<dbReference type="Antibodypedia" id="29209">
    <property type="antibodies" value="501 antibodies from 33 providers"/>
</dbReference>
<dbReference type="DNASU" id="11197"/>
<dbReference type="Ensembl" id="ENST00000286574.9">
    <property type="protein sequence ID" value="ENSP00000286574.4"/>
    <property type="gene ID" value="ENSG00000156076.10"/>
</dbReference>
<dbReference type="GeneID" id="11197"/>
<dbReference type="KEGG" id="hsa:11197"/>
<dbReference type="MANE-Select" id="ENST00000286574.9">
    <property type="protein sequence ID" value="ENSP00000286574.4"/>
    <property type="RefSeq nucleotide sequence ID" value="NM_007191.5"/>
    <property type="RefSeq protein sequence ID" value="NP_009122.2"/>
</dbReference>
<dbReference type="UCSC" id="uc001ssk.4">
    <property type="organism name" value="human"/>
</dbReference>
<dbReference type="AGR" id="HGNC:18081"/>
<dbReference type="CTD" id="11197"/>
<dbReference type="DisGeNET" id="11197"/>
<dbReference type="GeneCards" id="WIF1"/>
<dbReference type="HGNC" id="HGNC:18081">
    <property type="gene designation" value="WIF1"/>
</dbReference>
<dbReference type="HPA" id="ENSG00000156076">
    <property type="expression patterns" value="Tissue enriched (retina)"/>
</dbReference>
<dbReference type="MIM" id="605186">
    <property type="type" value="gene"/>
</dbReference>
<dbReference type="neXtProt" id="NX_Q9Y5W5"/>
<dbReference type="OpenTargets" id="ENSG00000156076"/>
<dbReference type="PharmGKB" id="PA38291"/>
<dbReference type="VEuPathDB" id="HostDB:ENSG00000156076"/>
<dbReference type="eggNOG" id="KOG1225">
    <property type="taxonomic scope" value="Eukaryota"/>
</dbReference>
<dbReference type="GeneTree" id="ENSGT00940000160401"/>
<dbReference type="HOGENOM" id="CLU_041961_0_0_1"/>
<dbReference type="InParanoid" id="Q9Y5W5"/>
<dbReference type="OMA" id="CKKALCY"/>
<dbReference type="OrthoDB" id="10266706at2759"/>
<dbReference type="PAN-GO" id="Q9Y5W5">
    <property type="GO annotations" value="4 GO annotations based on evolutionary models"/>
</dbReference>
<dbReference type="PhylomeDB" id="Q9Y5W5"/>
<dbReference type="PathwayCommons" id="Q9Y5W5"/>
<dbReference type="Reactome" id="R-HSA-201681">
    <property type="pathway name" value="TCF dependent signaling in response to WNT"/>
</dbReference>
<dbReference type="Reactome" id="R-HSA-3772470">
    <property type="pathway name" value="Negative regulation of TCF-dependent signaling by WNT ligand antagonists"/>
</dbReference>
<dbReference type="SignaLink" id="Q9Y5W5"/>
<dbReference type="SIGNOR" id="Q9Y5W5"/>
<dbReference type="BioGRID-ORCS" id="11197">
    <property type="hits" value="8 hits in 1143 CRISPR screens"/>
</dbReference>
<dbReference type="ChiTaRS" id="WIF1">
    <property type="organism name" value="human"/>
</dbReference>
<dbReference type="EvolutionaryTrace" id="Q9Y5W5"/>
<dbReference type="GeneWiki" id="WIF1"/>
<dbReference type="GenomeRNAi" id="11197"/>
<dbReference type="Pharos" id="Q9Y5W5">
    <property type="development level" value="Tbio"/>
</dbReference>
<dbReference type="PRO" id="PR:Q9Y5W5"/>
<dbReference type="Proteomes" id="UP000005640">
    <property type="component" value="Chromosome 12"/>
</dbReference>
<dbReference type="RNAct" id="Q9Y5W5">
    <property type="molecule type" value="protein"/>
</dbReference>
<dbReference type="Bgee" id="ENSG00000156076">
    <property type="expression patterns" value="Expressed in lower lobe of lung and 175 other cell types or tissues"/>
</dbReference>
<dbReference type="ExpressionAtlas" id="Q9Y5W5">
    <property type="expression patterns" value="baseline and differential"/>
</dbReference>
<dbReference type="GO" id="GO:0009986">
    <property type="term" value="C:cell surface"/>
    <property type="evidence" value="ECO:0000318"/>
    <property type="project" value="GO_Central"/>
</dbReference>
<dbReference type="GO" id="GO:0005576">
    <property type="term" value="C:extracellular region"/>
    <property type="evidence" value="ECO:0000318"/>
    <property type="project" value="GO_Central"/>
</dbReference>
<dbReference type="GO" id="GO:0005102">
    <property type="term" value="F:signaling receptor binding"/>
    <property type="evidence" value="ECO:0000318"/>
    <property type="project" value="GO_Central"/>
</dbReference>
<dbReference type="GO" id="GO:0017147">
    <property type="term" value="F:Wnt-protein binding"/>
    <property type="evidence" value="ECO:0000303"/>
    <property type="project" value="ParkinsonsUK-UCL"/>
</dbReference>
<dbReference type="GO" id="GO:0030178">
    <property type="term" value="P:negative regulation of Wnt signaling pathway"/>
    <property type="evidence" value="ECO:0000303"/>
    <property type="project" value="ParkinsonsUK-UCL"/>
</dbReference>
<dbReference type="GO" id="GO:0045600">
    <property type="term" value="P:positive regulation of fat cell differentiation"/>
    <property type="evidence" value="ECO:0007669"/>
    <property type="project" value="Ensembl"/>
</dbReference>
<dbReference type="GO" id="GO:0007165">
    <property type="term" value="P:signal transduction"/>
    <property type="evidence" value="ECO:0000303"/>
    <property type="project" value="ProtInc"/>
</dbReference>
<dbReference type="GO" id="GO:0016055">
    <property type="term" value="P:Wnt signaling pathway"/>
    <property type="evidence" value="ECO:0007669"/>
    <property type="project" value="UniProtKB-KW"/>
</dbReference>
<dbReference type="CDD" id="cd00054">
    <property type="entry name" value="EGF_CA"/>
    <property type="match status" value="2"/>
</dbReference>
<dbReference type="FunFam" id="2.60.40.2170:FF:000001">
    <property type="entry name" value="WNT inhibitory factor 1"/>
    <property type="match status" value="1"/>
</dbReference>
<dbReference type="FunFam" id="2.10.25.10:FF:000276">
    <property type="entry name" value="Wnt inhibitory factor 1"/>
    <property type="match status" value="1"/>
</dbReference>
<dbReference type="FunFam" id="2.10.25.10:FF:000295">
    <property type="entry name" value="Wnt inhibitory factor 1"/>
    <property type="match status" value="1"/>
</dbReference>
<dbReference type="Gene3D" id="2.10.25.10">
    <property type="entry name" value="Laminin"/>
    <property type="match status" value="2"/>
</dbReference>
<dbReference type="Gene3D" id="2.60.40.2170">
    <property type="entry name" value="Wnt, WIF domain"/>
    <property type="match status" value="1"/>
</dbReference>
<dbReference type="InterPro" id="IPR050969">
    <property type="entry name" value="Dev_Signal_Modulators"/>
</dbReference>
<dbReference type="InterPro" id="IPR013032">
    <property type="entry name" value="EGF-like_CS"/>
</dbReference>
<dbReference type="InterPro" id="IPR000742">
    <property type="entry name" value="EGF-like_dom"/>
</dbReference>
<dbReference type="InterPro" id="IPR003306">
    <property type="entry name" value="WIF"/>
</dbReference>
<dbReference type="InterPro" id="IPR038677">
    <property type="entry name" value="WIF_sf"/>
</dbReference>
<dbReference type="InterPro" id="IPR013309">
    <property type="entry name" value="Wnt-inh"/>
</dbReference>
<dbReference type="PANTHER" id="PTHR14949">
    <property type="entry name" value="EGF-LIKE-DOMAIN, MULTIPLE 7, 8"/>
    <property type="match status" value="1"/>
</dbReference>
<dbReference type="PANTHER" id="PTHR14949:SF32">
    <property type="entry name" value="WNT INHIBITORY FACTOR 1"/>
    <property type="match status" value="1"/>
</dbReference>
<dbReference type="Pfam" id="PF21700">
    <property type="entry name" value="EGF_DL_JAG"/>
    <property type="match status" value="1"/>
</dbReference>
<dbReference type="Pfam" id="PF12661">
    <property type="entry name" value="hEGF"/>
    <property type="match status" value="4"/>
</dbReference>
<dbReference type="Pfam" id="PF02019">
    <property type="entry name" value="WIF"/>
    <property type="match status" value="1"/>
</dbReference>
<dbReference type="PRINTS" id="PR01901">
    <property type="entry name" value="WIFPROTEIN"/>
</dbReference>
<dbReference type="SMART" id="SM00181">
    <property type="entry name" value="EGF"/>
    <property type="match status" value="5"/>
</dbReference>
<dbReference type="SMART" id="SM00469">
    <property type="entry name" value="WIF"/>
    <property type="match status" value="1"/>
</dbReference>
<dbReference type="PROSITE" id="PS00022">
    <property type="entry name" value="EGF_1"/>
    <property type="match status" value="5"/>
</dbReference>
<dbReference type="PROSITE" id="PS01186">
    <property type="entry name" value="EGF_2"/>
    <property type="match status" value="4"/>
</dbReference>
<dbReference type="PROSITE" id="PS50026">
    <property type="entry name" value="EGF_3"/>
    <property type="match status" value="5"/>
</dbReference>
<dbReference type="PROSITE" id="PS50814">
    <property type="entry name" value="WIF"/>
    <property type="match status" value="1"/>
</dbReference>
<feature type="signal peptide" evidence="2">
    <location>
        <begin position="1"/>
        <end position="28"/>
    </location>
</feature>
<feature type="chain" id="PRO_0000007775" description="Wnt inhibitory factor 1">
    <location>
        <begin position="29"/>
        <end position="379"/>
    </location>
</feature>
<feature type="domain" description="WIF" evidence="4">
    <location>
        <begin position="38"/>
        <end position="177"/>
    </location>
</feature>
<feature type="domain" description="EGF-like 1" evidence="3">
    <location>
        <begin position="178"/>
        <end position="210"/>
    </location>
</feature>
<feature type="domain" description="EGF-like 2" evidence="3">
    <location>
        <begin position="211"/>
        <end position="242"/>
    </location>
</feature>
<feature type="domain" description="EGF-like 3" evidence="3">
    <location>
        <begin position="243"/>
        <end position="271"/>
    </location>
</feature>
<feature type="domain" description="EGF-like 4" evidence="3">
    <location>
        <begin position="274"/>
        <end position="306"/>
    </location>
</feature>
<feature type="domain" description="EGF-like 5" evidence="3">
    <location>
        <begin position="307"/>
        <end position="338"/>
    </location>
</feature>
<feature type="region of interest" description="Disordered" evidence="5">
    <location>
        <begin position="354"/>
        <end position="379"/>
    </location>
</feature>
<feature type="compositionally biased region" description="Basic and acidic residues" evidence="5">
    <location>
        <begin position="364"/>
        <end position="373"/>
    </location>
</feature>
<feature type="glycosylation site" description="N-linked (GlcNAc...) asparagine" evidence="2">
    <location>
        <position position="88"/>
    </location>
</feature>
<feature type="glycosylation site" description="N-linked (GlcNAc...) asparagine" evidence="2">
    <location>
        <position position="245"/>
    </location>
</feature>
<feature type="disulfide bond" evidence="6">
    <location>
        <begin position="140"/>
        <end position="177"/>
    </location>
</feature>
<feature type="disulfide bond" evidence="1">
    <location>
        <begin position="182"/>
        <end position="192"/>
    </location>
</feature>
<feature type="disulfide bond" evidence="1">
    <location>
        <begin position="186"/>
        <end position="198"/>
    </location>
</feature>
<feature type="disulfide bond" evidence="1">
    <location>
        <begin position="200"/>
        <end position="209"/>
    </location>
</feature>
<feature type="disulfide bond" evidence="1">
    <location>
        <begin position="214"/>
        <end position="224"/>
    </location>
</feature>
<feature type="disulfide bond" evidence="1">
    <location>
        <begin position="218"/>
        <end position="230"/>
    </location>
</feature>
<feature type="disulfide bond" evidence="1">
    <location>
        <begin position="232"/>
        <end position="241"/>
    </location>
</feature>
<feature type="disulfide bond" evidence="1">
    <location>
        <begin position="246"/>
        <end position="256"/>
    </location>
</feature>
<feature type="disulfide bond" evidence="1">
    <location>
        <begin position="250"/>
        <end position="262"/>
    </location>
</feature>
<feature type="disulfide bond" evidence="1">
    <location>
        <begin position="278"/>
        <end position="288"/>
    </location>
</feature>
<feature type="disulfide bond" evidence="1">
    <location>
        <begin position="282"/>
        <end position="294"/>
    </location>
</feature>
<feature type="disulfide bond" evidence="1">
    <location>
        <begin position="296"/>
        <end position="305"/>
    </location>
</feature>
<feature type="disulfide bond" evidence="1">
    <location>
        <begin position="310"/>
        <end position="320"/>
    </location>
</feature>
<feature type="disulfide bond" evidence="1">
    <location>
        <begin position="314"/>
        <end position="326"/>
    </location>
</feature>
<feature type="disulfide bond" evidence="1">
    <location>
        <begin position="328"/>
        <end position="337"/>
    </location>
</feature>
<feature type="sequence conflict" description="In Ref. 3; AAH18037." evidence="8" ref="3">
    <original>Q</original>
    <variation>K</variation>
    <location>
        <position position="166"/>
    </location>
</feature>
<feature type="sequence conflict" description="In Ref. 1; AAD25402." evidence="8" ref="1">
    <original>Q</original>
    <variation>L</variation>
    <location>
        <position position="178"/>
    </location>
</feature>
<feature type="strand" evidence="10">
    <location>
        <begin position="36"/>
        <end position="40"/>
    </location>
</feature>
<feature type="helix" evidence="10">
    <location>
        <begin position="42"/>
        <end position="49"/>
    </location>
</feature>
<feature type="strand" evidence="10">
    <location>
        <begin position="55"/>
        <end position="59"/>
    </location>
</feature>
<feature type="helix" evidence="10">
    <location>
        <begin position="65"/>
        <end position="67"/>
    </location>
</feature>
<feature type="strand" evidence="11">
    <location>
        <begin position="68"/>
        <end position="70"/>
    </location>
</feature>
<feature type="helix" evidence="10">
    <location>
        <begin position="74"/>
        <end position="76"/>
    </location>
</feature>
<feature type="strand" evidence="10">
    <location>
        <begin position="85"/>
        <end position="93"/>
    </location>
</feature>
<feature type="strand" evidence="10">
    <location>
        <begin position="95"/>
        <end position="97"/>
    </location>
</feature>
<feature type="strand" evidence="10">
    <location>
        <begin position="99"/>
        <end position="109"/>
    </location>
</feature>
<feature type="strand" evidence="9">
    <location>
        <begin position="111"/>
        <end position="113"/>
    </location>
</feature>
<feature type="strand" evidence="10">
    <location>
        <begin position="118"/>
        <end position="121"/>
    </location>
</feature>
<feature type="strand" evidence="10">
    <location>
        <begin position="123"/>
        <end position="126"/>
    </location>
</feature>
<feature type="strand" evidence="10">
    <location>
        <begin position="131"/>
        <end position="137"/>
    </location>
</feature>
<feature type="strand" evidence="10">
    <location>
        <begin position="146"/>
        <end position="158"/>
    </location>
</feature>
<feature type="strand" evidence="10">
    <location>
        <begin position="163"/>
        <end position="165"/>
    </location>
</feature>
<feature type="strand" evidence="10">
    <location>
        <begin position="173"/>
        <end position="177"/>
    </location>
</feature>
<feature type="turn" evidence="11">
    <location>
        <begin position="206"/>
        <end position="209"/>
    </location>
</feature>
<sequence>MARRSAFPAAALWLWSILLCLLALRAEAGPPQEESLYLWIDAHQARVLIGFEEDILIVSEGKMAPFTHDFRKAQQRMPAIPVNIHSMNFTWQAAGQAEYFYEFLSLRSLDKGIMADPTVNVPLLGTVPHKASVVQVGFPCLGKQDGVAAFEVDVIVMNSEGNTILQTPQNAIFFKTCQQAECPGGCRNGGFCNERRICECPDGFHGPHCEKALCTPRCMNGGLCVTPGFCICPPGFYGVNCDKANCSTTCFNGGTCFYPGKCICPPGLEGEQCEISKCPQPCRNGGKCIGKSKCKCSKGYQGDLCSKPVCEPGCGAHGTCHEPNKCQCQEGWHGRHCNKRYEASLIHALRPAGAQLRQHTPSLKKAEERRDPPESNYIW</sequence>
<comment type="function">
    <text>Binds to WNT proteins and inhibits their activities. May be involved in mesoderm segmentation.</text>
</comment>
<comment type="subunit">
    <text evidence="7">Interacts with MYOC.</text>
</comment>
<comment type="interaction">
    <interactant intactId="EBI-3922719">
        <id>Q9Y5W5</id>
    </interactant>
    <interactant intactId="EBI-3867333">
        <id>A8MQ03</id>
        <label>CYSRT1</label>
    </interactant>
    <organismsDiffer>false</organismsDiffer>
    <experiments>3</experiments>
</comment>
<comment type="interaction">
    <interactant intactId="EBI-3922719">
        <id>Q9Y5W5</id>
    </interactant>
    <interactant intactId="EBI-10171774">
        <id>P60410</id>
        <label>KRTAP10-8</label>
    </interactant>
    <organismsDiffer>false</organismsDiffer>
    <experiments>6</experiments>
</comment>
<comment type="interaction">
    <interactant intactId="EBI-3922719">
        <id>Q9Y5W5</id>
    </interactant>
    <interactant intactId="EBI-6594545">
        <id>P41221</id>
        <label>WNT5A</label>
    </interactant>
    <organismsDiffer>false</organismsDiffer>
    <experiments>2</experiments>
</comment>
<comment type="interaction">
    <interactant intactId="EBI-3922719">
        <id>Q9Y5W5</id>
    </interactant>
    <interactant intactId="EBI-727198">
        <id>O00755</id>
        <label>WNT7A</label>
    </interactant>
    <organismsDiffer>false</organismsDiffer>
    <experiments>3</experiments>
</comment>
<comment type="interaction">
    <interactant intactId="EBI-3922719">
        <id>Q9Y5W5</id>
    </interactant>
    <interactant intactId="EBI-2899665">
        <id>P27467</id>
        <label>Wnt3a</label>
    </interactant>
    <organismsDiffer>true</organismsDiffer>
    <experiments>8</experiments>
</comment>
<comment type="interaction">
    <interactant intactId="EBI-3922719">
        <id>Q9Y5W5</id>
    </interactant>
    <interactant intactId="EBI-1570983">
        <id>P22725</id>
        <label>Wnt5a</label>
    </interactant>
    <organismsDiffer>true</organismsDiffer>
    <experiments>7</experiments>
</comment>
<comment type="subcellular location">
    <subcellularLocation>
        <location>Secreted</location>
    </subcellularLocation>
</comment>
<comment type="online information" name="Atlas of Genetics and Cytogenetics in Oncology and Haematology">
    <link uri="https://atlasgeneticsoncology.org/gene/44085/WIF1"/>
</comment>
<gene>
    <name type="primary">WIF1</name>
    <name type="ORF">UNQ191/PRO217</name>
</gene>
<protein>
    <recommendedName>
        <fullName>Wnt inhibitory factor 1</fullName>
        <shortName>WIF-1</shortName>
    </recommendedName>
</protein>
<keyword id="KW-0002">3D-structure</keyword>
<keyword id="KW-0217">Developmental protein</keyword>
<keyword id="KW-1015">Disulfide bond</keyword>
<keyword id="KW-0245">EGF-like domain</keyword>
<keyword id="KW-0325">Glycoprotein</keyword>
<keyword id="KW-1267">Proteomics identification</keyword>
<keyword id="KW-1185">Reference proteome</keyword>
<keyword id="KW-0677">Repeat</keyword>
<keyword id="KW-0964">Secreted</keyword>
<keyword id="KW-0732">Signal</keyword>
<keyword id="KW-0879">Wnt signaling pathway</keyword>
<name>WIF1_HUMAN</name>
<accession>Q9Y5W5</accession>
<accession>Q6UXI1</accession>
<accession>Q8WVG4</accession>
<proteinExistence type="evidence at protein level"/>
<organism>
    <name type="scientific">Homo sapiens</name>
    <name type="common">Human</name>
    <dbReference type="NCBI Taxonomy" id="9606"/>
    <lineage>
        <taxon>Eukaryota</taxon>
        <taxon>Metazoa</taxon>
        <taxon>Chordata</taxon>
        <taxon>Craniata</taxon>
        <taxon>Vertebrata</taxon>
        <taxon>Euteleostomi</taxon>
        <taxon>Mammalia</taxon>
        <taxon>Eutheria</taxon>
        <taxon>Euarchontoglires</taxon>
        <taxon>Primates</taxon>
        <taxon>Haplorrhini</taxon>
        <taxon>Catarrhini</taxon>
        <taxon>Hominidae</taxon>
        <taxon>Homo</taxon>
    </lineage>
</organism>
<reference key="1">
    <citation type="journal article" date="1999" name="Nature">
        <title>A new secreted protein that binds to Wnt proteins and inhibits their activities.</title>
        <authorList>
            <person name="Hsieh J.-C."/>
            <person name="Kodjabachian L."/>
            <person name="Rebbert M.L."/>
            <person name="Rattner A."/>
            <person name="Smallwood P.M."/>
            <person name="Samos C.H."/>
            <person name="Nusse R."/>
            <person name="Dawid I.B."/>
            <person name="Nathans J."/>
        </authorList>
    </citation>
    <scope>NUCLEOTIDE SEQUENCE [MRNA]</scope>
</reference>
<reference key="2">
    <citation type="journal article" date="2003" name="Genome Res.">
        <title>The secreted protein discovery initiative (SPDI), a large-scale effort to identify novel human secreted and transmembrane proteins: a bioinformatics assessment.</title>
        <authorList>
            <person name="Clark H.F."/>
            <person name="Gurney A.L."/>
            <person name="Abaya E."/>
            <person name="Baker K."/>
            <person name="Baldwin D.T."/>
            <person name="Brush J."/>
            <person name="Chen J."/>
            <person name="Chow B."/>
            <person name="Chui C."/>
            <person name="Crowley C."/>
            <person name="Currell B."/>
            <person name="Deuel B."/>
            <person name="Dowd P."/>
            <person name="Eaton D."/>
            <person name="Foster J.S."/>
            <person name="Grimaldi C."/>
            <person name="Gu Q."/>
            <person name="Hass P.E."/>
            <person name="Heldens S."/>
            <person name="Huang A."/>
            <person name="Kim H.S."/>
            <person name="Klimowski L."/>
            <person name="Jin Y."/>
            <person name="Johnson S."/>
            <person name="Lee J."/>
            <person name="Lewis L."/>
            <person name="Liao D."/>
            <person name="Mark M.R."/>
            <person name="Robbie E."/>
            <person name="Sanchez C."/>
            <person name="Schoenfeld J."/>
            <person name="Seshagiri S."/>
            <person name="Simmons L."/>
            <person name="Singh J."/>
            <person name="Smith V."/>
            <person name="Stinson J."/>
            <person name="Vagts A."/>
            <person name="Vandlen R.L."/>
            <person name="Watanabe C."/>
            <person name="Wieand D."/>
            <person name="Woods K."/>
            <person name="Xie M.-H."/>
            <person name="Yansura D.G."/>
            <person name="Yi S."/>
            <person name="Yu G."/>
            <person name="Yuan J."/>
            <person name="Zhang M."/>
            <person name="Zhang Z."/>
            <person name="Goddard A.D."/>
            <person name="Wood W.I."/>
            <person name="Godowski P.J."/>
            <person name="Gray A.M."/>
        </authorList>
    </citation>
    <scope>NUCLEOTIDE SEQUENCE [LARGE SCALE MRNA]</scope>
</reference>
<reference key="3">
    <citation type="journal article" date="2004" name="Genome Res.">
        <title>The status, quality, and expansion of the NIH full-length cDNA project: the Mammalian Gene Collection (MGC).</title>
        <authorList>
            <consortium name="The MGC Project Team"/>
        </authorList>
    </citation>
    <scope>NUCLEOTIDE SEQUENCE [LARGE SCALE MRNA]</scope>
    <source>
        <tissue>Brain</tissue>
    </source>
</reference>
<reference key="4">
    <citation type="journal article" date="2009" name="Mol. Cell. Biol.">
        <title>Myocilin is a modulator of Wnt signaling.</title>
        <authorList>
            <person name="Kwon H.S."/>
            <person name="Lee H.S."/>
            <person name="Ji Y."/>
            <person name="Rubin J.S."/>
            <person name="Tomarev S.I."/>
        </authorList>
    </citation>
    <scope>INTERACTION WITH MYOC</scope>
</reference>
<reference key="5">
    <citation type="journal article" date="2006" name="J. Mol. Biol.">
        <title>NMR structure of the WIF domain of the human Wnt-inhibitory factor-1.</title>
        <authorList>
            <person name="Liepinsh E."/>
            <person name="Banyai L."/>
            <person name="Patthy L."/>
            <person name="Otting G."/>
        </authorList>
    </citation>
    <scope>STRUCTURE BY NMR OF 32-181</scope>
    <scope>DISULFIDE BOND</scope>
</reference>